<accession>A6MM78</accession>
<sequence>MHLYKTSTPSTRNGAVDSQVKSNPRNNLIYGQHRCGKGRNARGIITAGHRGGGHKRLYRKIDFRRNEKNIYGRIVTIEYDPNRNAYICLIHYGDGEKRYILHPRGAIIGDTIVSGTEVPIKMGNALPLTDMPLGTAIHNIEITLGKGGQLARAAGAVAKLIAKEGKSATLKLPSGEVRLISKNCSATVGQVGNVGANQKSLGRAGSKCWLGKRPVVRGVVMNPVDHPHGGGEGRAPIGRKKPTTPWGYPALGRRSRKRNKYSDSLILRRRSK</sequence>
<comment type="subunit">
    <text evidence="1">Part of the 50S ribosomal subunit.</text>
</comment>
<comment type="subcellular location">
    <subcellularLocation>
        <location>Plastid</location>
        <location>Chloroplast</location>
    </subcellularLocation>
</comment>
<comment type="similarity">
    <text evidence="4">Belongs to the universal ribosomal protein uL2 family.</text>
</comment>
<reference key="1">
    <citation type="journal article" date="2007" name="Mol. Phylogenet. Evol.">
        <title>Phylogenetic and evolutionary implications of complete chloroplast genome sequences of four early-diverging angiosperms: Buxus (Buxaceae), Chloranthus (Chloranthaceae), Dioscorea (Dioscoreaceae), and Illicium (Schisandraceae).</title>
        <authorList>
            <person name="Hansen D.R."/>
            <person name="Dastidar S.G."/>
            <person name="Cai Z."/>
            <person name="Penaflor C."/>
            <person name="Kuehl J.V."/>
            <person name="Boore J.L."/>
            <person name="Jansen R.K."/>
        </authorList>
    </citation>
    <scope>NUCLEOTIDE SEQUENCE [LARGE SCALE GENOMIC DNA]</scope>
</reference>
<feature type="chain" id="PRO_0000310066" description="Large ribosomal subunit protein uL2cz/uL2cy">
    <location>
        <begin position="1"/>
        <end position="272"/>
    </location>
</feature>
<feature type="region of interest" description="Disordered" evidence="3">
    <location>
        <begin position="1"/>
        <end position="27"/>
    </location>
</feature>
<feature type="region of interest" description="Disordered" evidence="3">
    <location>
        <begin position="222"/>
        <end position="272"/>
    </location>
</feature>
<feature type="compositionally biased region" description="Polar residues" evidence="3">
    <location>
        <begin position="1"/>
        <end position="13"/>
    </location>
</feature>
<dbReference type="EMBL" id="EF380351">
    <property type="protein sequence ID" value="ABQ45290.1"/>
    <property type="molecule type" value="Genomic_DNA"/>
</dbReference>
<dbReference type="EMBL" id="EF380351">
    <property type="protein sequence ID" value="ABQ45314.1"/>
    <property type="molecule type" value="Genomic_DNA"/>
</dbReference>
<dbReference type="SMR" id="A6MM78"/>
<dbReference type="GO" id="GO:0009507">
    <property type="term" value="C:chloroplast"/>
    <property type="evidence" value="ECO:0007669"/>
    <property type="project" value="UniProtKB-SubCell"/>
</dbReference>
<dbReference type="GO" id="GO:0005762">
    <property type="term" value="C:mitochondrial large ribosomal subunit"/>
    <property type="evidence" value="ECO:0007669"/>
    <property type="project" value="TreeGrafter"/>
</dbReference>
<dbReference type="GO" id="GO:0019843">
    <property type="term" value="F:rRNA binding"/>
    <property type="evidence" value="ECO:0007669"/>
    <property type="project" value="UniProtKB-UniRule"/>
</dbReference>
<dbReference type="GO" id="GO:0003735">
    <property type="term" value="F:structural constituent of ribosome"/>
    <property type="evidence" value="ECO:0007669"/>
    <property type="project" value="InterPro"/>
</dbReference>
<dbReference type="GO" id="GO:0016740">
    <property type="term" value="F:transferase activity"/>
    <property type="evidence" value="ECO:0007669"/>
    <property type="project" value="InterPro"/>
</dbReference>
<dbReference type="GO" id="GO:0032543">
    <property type="term" value="P:mitochondrial translation"/>
    <property type="evidence" value="ECO:0007669"/>
    <property type="project" value="TreeGrafter"/>
</dbReference>
<dbReference type="FunFam" id="4.10.950.10:FF:000001">
    <property type="entry name" value="50S ribosomal protein L2"/>
    <property type="match status" value="1"/>
</dbReference>
<dbReference type="FunFam" id="2.30.30.30:FF:000008">
    <property type="entry name" value="50S ribosomal protein L2, chloroplastic"/>
    <property type="match status" value="1"/>
</dbReference>
<dbReference type="FunFam" id="2.40.50.140:FF:000029">
    <property type="entry name" value="50S ribosomal protein L2, chloroplastic"/>
    <property type="match status" value="1"/>
</dbReference>
<dbReference type="Gene3D" id="2.30.30.30">
    <property type="match status" value="1"/>
</dbReference>
<dbReference type="Gene3D" id="2.40.50.140">
    <property type="entry name" value="Nucleic acid-binding proteins"/>
    <property type="match status" value="1"/>
</dbReference>
<dbReference type="Gene3D" id="4.10.950.10">
    <property type="entry name" value="Ribosomal protein L2, domain 3"/>
    <property type="match status" value="1"/>
</dbReference>
<dbReference type="HAMAP" id="MF_01320_B">
    <property type="entry name" value="Ribosomal_uL2_B"/>
    <property type="match status" value="1"/>
</dbReference>
<dbReference type="InterPro" id="IPR012340">
    <property type="entry name" value="NA-bd_OB-fold"/>
</dbReference>
<dbReference type="InterPro" id="IPR014722">
    <property type="entry name" value="Rib_uL2_dom2"/>
</dbReference>
<dbReference type="InterPro" id="IPR002171">
    <property type="entry name" value="Ribosomal_uL2"/>
</dbReference>
<dbReference type="InterPro" id="IPR005880">
    <property type="entry name" value="Ribosomal_uL2_bac/org-type"/>
</dbReference>
<dbReference type="InterPro" id="IPR022669">
    <property type="entry name" value="Ribosomal_uL2_C"/>
</dbReference>
<dbReference type="InterPro" id="IPR022671">
    <property type="entry name" value="Ribosomal_uL2_CS"/>
</dbReference>
<dbReference type="InterPro" id="IPR014726">
    <property type="entry name" value="Ribosomal_uL2_dom3"/>
</dbReference>
<dbReference type="InterPro" id="IPR022666">
    <property type="entry name" value="Ribosomal_uL2_RNA-bd_dom"/>
</dbReference>
<dbReference type="InterPro" id="IPR008991">
    <property type="entry name" value="Translation_prot_SH3-like_sf"/>
</dbReference>
<dbReference type="NCBIfam" id="TIGR01171">
    <property type="entry name" value="rplB_bact"/>
    <property type="match status" value="1"/>
</dbReference>
<dbReference type="PANTHER" id="PTHR13691:SF5">
    <property type="entry name" value="LARGE RIBOSOMAL SUBUNIT PROTEIN UL2M"/>
    <property type="match status" value="1"/>
</dbReference>
<dbReference type="PANTHER" id="PTHR13691">
    <property type="entry name" value="RIBOSOMAL PROTEIN L2"/>
    <property type="match status" value="1"/>
</dbReference>
<dbReference type="Pfam" id="PF00181">
    <property type="entry name" value="Ribosomal_L2"/>
    <property type="match status" value="1"/>
</dbReference>
<dbReference type="Pfam" id="PF03947">
    <property type="entry name" value="Ribosomal_L2_C"/>
    <property type="match status" value="1"/>
</dbReference>
<dbReference type="PIRSF" id="PIRSF002158">
    <property type="entry name" value="Ribosomal_L2"/>
    <property type="match status" value="1"/>
</dbReference>
<dbReference type="SMART" id="SM01383">
    <property type="entry name" value="Ribosomal_L2"/>
    <property type="match status" value="1"/>
</dbReference>
<dbReference type="SMART" id="SM01382">
    <property type="entry name" value="Ribosomal_L2_C"/>
    <property type="match status" value="1"/>
</dbReference>
<dbReference type="SUPFAM" id="SSF50249">
    <property type="entry name" value="Nucleic acid-binding proteins"/>
    <property type="match status" value="1"/>
</dbReference>
<dbReference type="SUPFAM" id="SSF50104">
    <property type="entry name" value="Translation proteins SH3-like domain"/>
    <property type="match status" value="1"/>
</dbReference>
<dbReference type="PROSITE" id="PS00467">
    <property type="entry name" value="RIBOSOMAL_L2"/>
    <property type="match status" value="1"/>
</dbReference>
<evidence type="ECO:0000250" key="1"/>
<evidence type="ECO:0000255" key="2">
    <source>
        <dbReference type="HAMAP-Rule" id="MF_01320"/>
    </source>
</evidence>
<evidence type="ECO:0000256" key="3">
    <source>
        <dbReference type="SAM" id="MobiDB-lite"/>
    </source>
</evidence>
<evidence type="ECO:0000305" key="4"/>
<name>RK2_BUXMI</name>
<organism>
    <name type="scientific">Buxus microphylla</name>
    <name type="common">Littleleaf boxwood</name>
    <name type="synonym">Japanese boxwood</name>
    <dbReference type="NCBI Taxonomy" id="153571"/>
    <lineage>
        <taxon>Eukaryota</taxon>
        <taxon>Viridiplantae</taxon>
        <taxon>Streptophyta</taxon>
        <taxon>Embryophyta</taxon>
        <taxon>Tracheophyta</taxon>
        <taxon>Spermatophyta</taxon>
        <taxon>Magnoliopsida</taxon>
        <taxon>Buxales</taxon>
        <taxon>Buxaceae</taxon>
        <taxon>Buxus</taxon>
    </lineage>
</organism>
<keyword id="KW-0150">Chloroplast</keyword>
<keyword id="KW-0934">Plastid</keyword>
<keyword id="KW-0687">Ribonucleoprotein</keyword>
<keyword id="KW-0689">Ribosomal protein</keyword>
<protein>
    <recommendedName>
        <fullName evidence="2">Large ribosomal subunit protein uL2cz/uL2cy</fullName>
    </recommendedName>
    <alternativeName>
        <fullName evidence="4">50S ribosomal protein L2, chloroplastic</fullName>
    </alternativeName>
</protein>
<geneLocation type="chloroplast"/>
<gene>
    <name type="primary">rpl2-A</name>
</gene>
<gene>
    <name type="primary">rpl2-B</name>
</gene>
<proteinExistence type="inferred from homology"/>